<feature type="chain" id="PRO_0000282412" description="Spindle and centriole-associated protein 1">
    <location>
        <begin position="1"/>
        <end position="860"/>
    </location>
</feature>
<feature type="region of interest" description="Disordered" evidence="5">
    <location>
        <begin position="160"/>
        <end position="200"/>
    </location>
</feature>
<feature type="region of interest" description="Disordered" evidence="5">
    <location>
        <begin position="232"/>
        <end position="254"/>
    </location>
</feature>
<feature type="region of interest" description="Disordered" evidence="5">
    <location>
        <begin position="293"/>
        <end position="330"/>
    </location>
</feature>
<feature type="region of interest" description="Disordered" evidence="5">
    <location>
        <begin position="790"/>
        <end position="860"/>
    </location>
</feature>
<feature type="coiled-coil region" evidence="4">
    <location>
        <begin position="383"/>
        <end position="437"/>
    </location>
</feature>
<feature type="coiled-coil region" evidence="4">
    <location>
        <begin position="729"/>
        <end position="755"/>
    </location>
</feature>
<feature type="compositionally biased region" description="Low complexity" evidence="5">
    <location>
        <begin position="236"/>
        <end position="249"/>
    </location>
</feature>
<feature type="compositionally biased region" description="Polar residues" evidence="5">
    <location>
        <begin position="308"/>
        <end position="330"/>
    </location>
</feature>
<feature type="compositionally biased region" description="Low complexity" evidence="5">
    <location>
        <begin position="808"/>
        <end position="824"/>
    </location>
</feature>
<feature type="modified residue" description="Phosphothreonine" evidence="3">
    <location>
        <position position="236"/>
    </location>
</feature>
<feature type="modified residue" description="Phosphoserine" evidence="3">
    <location>
        <position position="646"/>
    </location>
</feature>
<feature type="modified residue" description="Phosphoserine" evidence="3">
    <location>
        <position position="765"/>
    </location>
</feature>
<feature type="modified residue" description="Phosphoserine" evidence="3">
    <location>
        <position position="769"/>
    </location>
</feature>
<feature type="modified residue" description="Phosphoserine" evidence="2">
    <location>
        <position position="824"/>
    </location>
</feature>
<protein>
    <recommendedName>
        <fullName>Spindle and centriole-associated protein 1</fullName>
    </recommendedName>
    <alternativeName>
        <fullName>Coiled-coil domain-containing protein 52</fullName>
    </alternativeName>
</protein>
<accession>Q2T9X8</accession>
<organism>
    <name type="scientific">Bos taurus</name>
    <name type="common">Bovine</name>
    <dbReference type="NCBI Taxonomy" id="9913"/>
    <lineage>
        <taxon>Eukaryota</taxon>
        <taxon>Metazoa</taxon>
        <taxon>Chordata</taxon>
        <taxon>Craniata</taxon>
        <taxon>Vertebrata</taxon>
        <taxon>Euteleostomi</taxon>
        <taxon>Mammalia</taxon>
        <taxon>Eutheria</taxon>
        <taxon>Laurasiatheria</taxon>
        <taxon>Artiodactyla</taxon>
        <taxon>Ruminantia</taxon>
        <taxon>Pecora</taxon>
        <taxon>Bovidae</taxon>
        <taxon>Bovinae</taxon>
        <taxon>Bos</taxon>
    </lineage>
</organism>
<dbReference type="EMBL" id="BC111217">
    <property type="protein sequence ID" value="AAI11218.1"/>
    <property type="molecule type" value="mRNA"/>
</dbReference>
<dbReference type="RefSeq" id="NP_001033206.1">
    <property type="nucleotide sequence ID" value="NM_001038117.2"/>
</dbReference>
<dbReference type="SMR" id="Q2T9X8"/>
<dbReference type="FunCoup" id="Q2T9X8">
    <property type="interactions" value="2090"/>
</dbReference>
<dbReference type="STRING" id="9913.ENSBTAP00000049245"/>
<dbReference type="PaxDb" id="9913-ENSBTAP00000049245"/>
<dbReference type="GeneID" id="515350"/>
<dbReference type="KEGG" id="bta:515350"/>
<dbReference type="CTD" id="152185"/>
<dbReference type="eggNOG" id="ENOG502QQ0H">
    <property type="taxonomic scope" value="Eukaryota"/>
</dbReference>
<dbReference type="InParanoid" id="Q2T9X8"/>
<dbReference type="OrthoDB" id="6361178at2759"/>
<dbReference type="Proteomes" id="UP000009136">
    <property type="component" value="Unplaced"/>
</dbReference>
<dbReference type="GO" id="GO:0005814">
    <property type="term" value="C:centriole"/>
    <property type="evidence" value="ECO:0000250"/>
    <property type="project" value="UniProtKB"/>
</dbReference>
<dbReference type="GO" id="GO:0005813">
    <property type="term" value="C:centrosome"/>
    <property type="evidence" value="ECO:0000318"/>
    <property type="project" value="GO_Central"/>
</dbReference>
<dbReference type="GO" id="GO:0005737">
    <property type="term" value="C:cytoplasm"/>
    <property type="evidence" value="ECO:0007669"/>
    <property type="project" value="UniProtKB-KW"/>
</dbReference>
<dbReference type="GO" id="GO:0005819">
    <property type="term" value="C:spindle"/>
    <property type="evidence" value="ECO:0000250"/>
    <property type="project" value="UniProtKB"/>
</dbReference>
<dbReference type="GO" id="GO:0051301">
    <property type="term" value="P:cell division"/>
    <property type="evidence" value="ECO:0007669"/>
    <property type="project" value="UniProtKB-KW"/>
</dbReference>
<dbReference type="GO" id="GO:0051310">
    <property type="term" value="P:metaphase chromosome alignment"/>
    <property type="evidence" value="ECO:0000318"/>
    <property type="project" value="GO_Central"/>
</dbReference>
<dbReference type="GO" id="GO:0090307">
    <property type="term" value="P:mitotic spindle assembly"/>
    <property type="evidence" value="ECO:0000250"/>
    <property type="project" value="UniProtKB"/>
</dbReference>
<dbReference type="GO" id="GO:0046599">
    <property type="term" value="P:regulation of centriole replication"/>
    <property type="evidence" value="ECO:0000250"/>
    <property type="project" value="UniProtKB"/>
</dbReference>
<dbReference type="InterPro" id="IPR031387">
    <property type="entry name" value="SPICE1"/>
</dbReference>
<dbReference type="PANTHER" id="PTHR31167">
    <property type="entry name" value="SPINDLE AND CENTRIOLE ASSOCIATED PROTEIN 1 SPICE1"/>
    <property type="match status" value="1"/>
</dbReference>
<dbReference type="PANTHER" id="PTHR31167:SF3">
    <property type="entry name" value="SPINDLE AND CENTRIOLE-ASSOCIATED PROTEIN 1"/>
    <property type="match status" value="1"/>
</dbReference>
<dbReference type="Pfam" id="PF15678">
    <property type="entry name" value="SPICE"/>
    <property type="match status" value="1"/>
</dbReference>
<proteinExistence type="evidence at transcript level"/>
<evidence type="ECO:0000250" key="1"/>
<evidence type="ECO:0000250" key="2">
    <source>
        <dbReference type="UniProtKB" id="Q8C804"/>
    </source>
</evidence>
<evidence type="ECO:0000250" key="3">
    <source>
        <dbReference type="UniProtKB" id="Q8N0Z3"/>
    </source>
</evidence>
<evidence type="ECO:0000255" key="4"/>
<evidence type="ECO:0000256" key="5">
    <source>
        <dbReference type="SAM" id="MobiDB-lite"/>
    </source>
</evidence>
<comment type="function">
    <text evidence="1">Regulator required for centriole duplication. for proper bipolar spindle formation and chromosome congression in mitosis (By similarity).</text>
</comment>
<comment type="subunit">
    <text evidence="1">Interacts with CEP120.</text>
</comment>
<comment type="subcellular location">
    <subcellularLocation>
        <location evidence="1">Cytoplasm</location>
        <location evidence="1">Cytoskeleton</location>
        <location evidence="1">Microtubule organizing center</location>
        <location evidence="1">Centrosome</location>
        <location evidence="1">Centriole</location>
    </subcellularLocation>
    <subcellularLocation>
        <location evidence="1">Cytoplasm</location>
        <location evidence="1">Cytoskeleton</location>
        <location evidence="1">Spindle</location>
    </subcellularLocation>
</comment>
<reference key="1">
    <citation type="submission" date="2005-12" db="EMBL/GenBank/DDBJ databases">
        <authorList>
            <consortium name="NIH - Mammalian Gene Collection (MGC) project"/>
        </authorList>
    </citation>
    <scope>NUCLEOTIDE SEQUENCE [LARGE SCALE MRNA]</scope>
    <source>
        <strain>Crossbred X Angus</strain>
        <tissue>Liver</tissue>
    </source>
</reference>
<name>SPICE_BOVIN</name>
<gene>
    <name type="primary">SPICE1</name>
    <name type="synonym">CCDC52</name>
</gene>
<keyword id="KW-0131">Cell cycle</keyword>
<keyword id="KW-0132">Cell division</keyword>
<keyword id="KW-0175">Coiled coil</keyword>
<keyword id="KW-0963">Cytoplasm</keyword>
<keyword id="KW-0206">Cytoskeleton</keyword>
<keyword id="KW-0498">Mitosis</keyword>
<keyword id="KW-0597">Phosphoprotein</keyword>
<keyword id="KW-1185">Reference proteome</keyword>
<sequence length="860" mass="95713">MSFVRVNRYGPRGGGRKTLKVKKKTSVKQEWDNTVTDLTVHRATPEDLIRRHEIHKSKNRALVHWELQEKALKRRWKKQKPEISNLEKRRLSIMKEILSDQYQLQDVLEKSDHLMATAKGLFVDFPRRRTGFPNVTMAPESSQSPTVVSKDPVTQAIRSESVIEPQALNEVDDDEQEGTVNSQSEESENELDNSLSSQSNANAGTFLHQIKEENSELINKLWTDIQQKVATQSQMTASSGTPSSASPSGEQKAALNATNAVKRIHTRLQPEESTETLDSSYVVGQVLNSRKQKQLLNKVKRKPDSRAPSKQKSSMLSASTASTDLPSSSNPSLDVLKHMIHEVEHEIEEYERWTGREVQGLQNSQGLTGFTLSLVSSLCRLVRYLKESELQLRKEVETRQRLEEALGDHRELIDALTAEVLFLREENTATQARLQQYMITTDEQLISLTHAIKNCPVISNKESQALERGATSQRHIDNPEDPAVNASVSMPLMFRGEDVVEFPQEDLPVKLSQVPNPPESGDLASSLPGHIFEPAVLLTPPRQKSNSEFSPLQDVLRRTVQTRPAPRIPPTVEIIEKEQNWEKKTLPVGADIQNSSDESHLFTQRWRASHMGEDSQSKTQAPFVSLSQPLCSSQSSMQQSRNPTLSEEPLVLGDGQQLRTNETLIQRKDIMARIAELTLQNSDIRAHLNNIIGPGGEQGDGLREFNRQETSHASDTMATFPAVQPLTPSSMEERIAELNRQSMEARGKLLQLIEQQKLLGLNPSSPPVSPVQSPLRAWAEGGKRTIEVSIPGAEAPESSKCSTDSPTSGLNSRRSSGAASNSCSPLNATSGSGRLTPLNPRAKIEKQNEEGWFALSTHVS</sequence>